<sequence>MSGLIGKTGIVVRNIPRVEPHMIDALGRLGVATVHEAQGRKGLLNTAVRPIQQGVAVAGSAVTVLVAPGDNWMFHVAVEQCRPGDVLVVAPSSPCSDGYFGDLLATSLQARGVLGLVIDAGVRDSQTLRDMGFAVWSRAINAQGTVKEVLGSVNLPLLCAGQLVNAGDIVVADDDGVVVVRHGEAQAVLEAATQRADLEERKRLRLAAGELGLDIYEMRPRLAAKGLRYVDHLTDLEG</sequence>
<organism>
    <name type="scientific">Pseudomonas putida (strain ATCC 47054 / DSM 6125 / CFBP 8728 / NCIMB 11950 / KT2440)</name>
    <dbReference type="NCBI Taxonomy" id="160488"/>
    <lineage>
        <taxon>Bacteria</taxon>
        <taxon>Pseudomonadati</taxon>
        <taxon>Pseudomonadota</taxon>
        <taxon>Gammaproteobacteria</taxon>
        <taxon>Pseudomonadales</taxon>
        <taxon>Pseudomonadaceae</taxon>
        <taxon>Pseudomonas</taxon>
    </lineage>
</organism>
<accession>Q88JX9</accession>
<gene>
    <name type="primary">galC</name>
    <name type="ordered locus">PP_2514</name>
</gene>
<proteinExistence type="evidence at protein level"/>
<protein>
    <recommendedName>
        <fullName>4-carboxy-4-hydroxy-2-oxoadipic acid aldolase</fullName>
    </recommendedName>
    <alternativeName>
        <fullName>CHA aldolase</fullName>
        <ecNumber evidence="3">4.1.3.17</ecNumber>
    </alternativeName>
    <alternativeName>
        <fullName>Gallate degradation protein C</fullName>
    </alternativeName>
</protein>
<feature type="chain" id="PRO_0000418487" description="4-carboxy-4-hydroxy-2-oxoadipic acid aldolase">
    <location>
        <begin position="1"/>
        <end position="238"/>
    </location>
</feature>
<feature type="binding site" evidence="2">
    <location>
        <begin position="101"/>
        <end position="104"/>
    </location>
    <ligand>
        <name>substrate</name>
    </ligand>
</feature>
<feature type="binding site" evidence="2">
    <location>
        <position position="123"/>
    </location>
    <ligand>
        <name>substrate</name>
    </ligand>
</feature>
<feature type="binding site" evidence="2">
    <location>
        <position position="124"/>
    </location>
    <ligand>
        <name>Mg(2+)</name>
        <dbReference type="ChEBI" id="CHEBI:18420"/>
    </ligand>
</feature>
<comment type="function">
    <text evidence="3">Catalyzes the conversion of 4-carboxy-4-hydroxy-2-oxoadipic acid (CHA) to pyruvate and oxaloacetate, the last step of gallate degradation pathway.</text>
</comment>
<comment type="catalytic activity">
    <reaction evidence="3">
        <text>4-hydroxy-4-methyl-2-oxoglutarate = 2 pyruvate</text>
        <dbReference type="Rhea" id="RHEA:22748"/>
        <dbReference type="ChEBI" id="CHEBI:15361"/>
        <dbReference type="ChEBI" id="CHEBI:58276"/>
        <dbReference type="EC" id="4.1.3.17"/>
    </reaction>
</comment>
<comment type="catalytic activity">
    <reaction evidence="3">
        <text>2-hydroxy-4-oxobutane-1,2,4-tricarboxylate = oxaloacetate + pyruvate</text>
        <dbReference type="Rhea" id="RHEA:28935"/>
        <dbReference type="ChEBI" id="CHEBI:15361"/>
        <dbReference type="ChEBI" id="CHEBI:16452"/>
        <dbReference type="ChEBI" id="CHEBI:58075"/>
        <dbReference type="EC" id="4.1.3.17"/>
    </reaction>
</comment>
<comment type="cofactor">
    <cofactor evidence="5">
        <name>Mg(2+)</name>
        <dbReference type="ChEBI" id="CHEBI:18420"/>
    </cofactor>
</comment>
<comment type="subunit">
    <text evidence="1">Homohexamer.</text>
</comment>
<comment type="disruption phenotype">
    <text evidence="3">Cells are unable to grow in gallate.</text>
</comment>
<comment type="similarity">
    <text evidence="4">Belongs to the LigK/PcmE family.</text>
</comment>
<reference key="1">
    <citation type="journal article" date="2002" name="Environ. Microbiol.">
        <title>Complete genome sequence and comparative analysis of the metabolically versatile Pseudomonas putida KT2440.</title>
        <authorList>
            <person name="Nelson K.E."/>
            <person name="Weinel C."/>
            <person name="Paulsen I.T."/>
            <person name="Dodson R.J."/>
            <person name="Hilbert H."/>
            <person name="Martins dos Santos V.A.P."/>
            <person name="Fouts D.E."/>
            <person name="Gill S.R."/>
            <person name="Pop M."/>
            <person name="Holmes M."/>
            <person name="Brinkac L.M."/>
            <person name="Beanan M.J."/>
            <person name="DeBoy R.T."/>
            <person name="Daugherty S.C."/>
            <person name="Kolonay J.F."/>
            <person name="Madupu R."/>
            <person name="Nelson W.C."/>
            <person name="White O."/>
            <person name="Peterson J.D."/>
            <person name="Khouri H.M."/>
            <person name="Hance I."/>
            <person name="Chris Lee P."/>
            <person name="Holtzapple E.K."/>
            <person name="Scanlan D."/>
            <person name="Tran K."/>
            <person name="Moazzez A."/>
            <person name="Utterback T.R."/>
            <person name="Rizzo M."/>
            <person name="Lee K."/>
            <person name="Kosack D."/>
            <person name="Moestl D."/>
            <person name="Wedler H."/>
            <person name="Lauber J."/>
            <person name="Stjepandic D."/>
            <person name="Hoheisel J."/>
            <person name="Straetz M."/>
            <person name="Heim S."/>
            <person name="Kiewitz C."/>
            <person name="Eisen J.A."/>
            <person name="Timmis K.N."/>
            <person name="Duesterhoeft A."/>
            <person name="Tuemmler B."/>
            <person name="Fraser C.M."/>
        </authorList>
    </citation>
    <scope>NUCLEOTIDE SEQUENCE [LARGE SCALE GENOMIC DNA]</scope>
    <source>
        <strain>ATCC 47054 / DSM 6125 / CFBP 8728 / NCIMB 11950 / KT2440</strain>
    </source>
</reference>
<reference key="2">
    <citation type="journal article" date="2011" name="Mol. Microbiol.">
        <title>Unravelling the gallic acid degradation pathway in bacteria: the gal cluster from Pseudomonas putida.</title>
        <authorList>
            <person name="Nogales J."/>
            <person name="Canales A."/>
            <person name="Jimenez-Barbero J."/>
            <person name="Serra B."/>
            <person name="Pingarron J.M."/>
            <person name="Garcia J.L."/>
            <person name="Diaz E."/>
        </authorList>
    </citation>
    <scope>FUNCTION</scope>
    <scope>CATALYTIC ACTIVITY</scope>
    <scope>COFACTOR</scope>
    <scope>PATHWAY</scope>
    <scope>DISRUPTION PHENOTYPE</scope>
    <source>
        <strain>ATCC 47054 / DSM 6125 / CFBP 8728 / NCIMB 11950 / KT2440</strain>
    </source>
</reference>
<name>GALC_PSEPK</name>
<dbReference type="EC" id="4.1.3.17" evidence="3"/>
<dbReference type="EMBL" id="AE015451">
    <property type="protein sequence ID" value="AAN68126.1"/>
    <property type="molecule type" value="Genomic_DNA"/>
</dbReference>
<dbReference type="RefSeq" id="NP_744662.1">
    <property type="nucleotide sequence ID" value="NC_002947.4"/>
</dbReference>
<dbReference type="RefSeq" id="WP_010953448.1">
    <property type="nucleotide sequence ID" value="NZ_CP169744.1"/>
</dbReference>
<dbReference type="SMR" id="Q88JX9"/>
<dbReference type="STRING" id="160488.PP_2514"/>
<dbReference type="PaxDb" id="160488-PP_2514"/>
<dbReference type="KEGG" id="ppu:PP_2514"/>
<dbReference type="PATRIC" id="fig|160488.4.peg.2669"/>
<dbReference type="eggNOG" id="COG0684">
    <property type="taxonomic scope" value="Bacteria"/>
</dbReference>
<dbReference type="HOGENOM" id="CLU_072626_3_2_6"/>
<dbReference type="OrthoDB" id="8717144at2"/>
<dbReference type="PhylomeDB" id="Q88JX9"/>
<dbReference type="BioCyc" id="MetaCyc:MONOMER-3481"/>
<dbReference type="BioCyc" id="PPUT160488:G1G01-2698-MONOMER"/>
<dbReference type="Proteomes" id="UP000000556">
    <property type="component" value="Chromosome"/>
</dbReference>
<dbReference type="GO" id="GO:0047443">
    <property type="term" value="F:4-hydroxy-4-methyl-2-oxoglutarate aldolase activity"/>
    <property type="evidence" value="ECO:0007669"/>
    <property type="project" value="UniProtKB-EC"/>
</dbReference>
<dbReference type="GO" id="GO:0046872">
    <property type="term" value="F:metal ion binding"/>
    <property type="evidence" value="ECO:0007669"/>
    <property type="project" value="UniProtKB-KW"/>
</dbReference>
<dbReference type="GO" id="GO:0016833">
    <property type="term" value="F:oxo-acid-lyase activity"/>
    <property type="evidence" value="ECO:0000314"/>
    <property type="project" value="UniProtKB"/>
</dbReference>
<dbReference type="GO" id="GO:0019396">
    <property type="term" value="P:gallate catabolic process"/>
    <property type="evidence" value="ECO:0000314"/>
    <property type="project" value="UniProtKB"/>
</dbReference>
<dbReference type="CDD" id="cd16841">
    <property type="entry name" value="RraA_family"/>
    <property type="match status" value="1"/>
</dbReference>
<dbReference type="FunFam" id="3.50.30.40:FF:000002">
    <property type="entry name" value="4-carboxy-4-hydroxy-2-oxoadipate aldolase/oxaloacetate decarboxylase"/>
    <property type="match status" value="1"/>
</dbReference>
<dbReference type="Gene3D" id="3.50.30.40">
    <property type="entry name" value="Ribonuclease E inhibitor RraA/RraA-like"/>
    <property type="match status" value="1"/>
</dbReference>
<dbReference type="InterPro" id="IPR014165">
    <property type="entry name" value="LigK_PcmE"/>
</dbReference>
<dbReference type="InterPro" id="IPR005493">
    <property type="entry name" value="RraA/RraA-like"/>
</dbReference>
<dbReference type="InterPro" id="IPR036704">
    <property type="entry name" value="RraA/RraA-like_sf"/>
</dbReference>
<dbReference type="NCBIfam" id="TIGR02798">
    <property type="entry name" value="ligK_PcmE"/>
    <property type="match status" value="1"/>
</dbReference>
<dbReference type="NCBIfam" id="NF006731">
    <property type="entry name" value="PRK09262.1"/>
    <property type="match status" value="1"/>
</dbReference>
<dbReference type="PANTHER" id="PTHR33254">
    <property type="entry name" value="4-HYDROXY-4-METHYL-2-OXOGLUTARATE ALDOLASE 3-RELATED"/>
    <property type="match status" value="1"/>
</dbReference>
<dbReference type="PANTHER" id="PTHR33254:SF16">
    <property type="entry name" value="BLR3842 PROTEIN"/>
    <property type="match status" value="1"/>
</dbReference>
<dbReference type="Pfam" id="PF03737">
    <property type="entry name" value="RraA-like"/>
    <property type="match status" value="1"/>
</dbReference>
<dbReference type="SUPFAM" id="SSF89562">
    <property type="entry name" value="RraA-like"/>
    <property type="match status" value="1"/>
</dbReference>
<evidence type="ECO:0000250" key="1"/>
<evidence type="ECO:0000250" key="2">
    <source>
        <dbReference type="UniProtKB" id="A5W059"/>
    </source>
</evidence>
<evidence type="ECO:0000269" key="3">
    <source>
    </source>
</evidence>
<evidence type="ECO:0000305" key="4"/>
<evidence type="ECO:0000305" key="5">
    <source>
    </source>
</evidence>
<keyword id="KW-0058">Aromatic hydrocarbons catabolism</keyword>
<keyword id="KW-0456">Lyase</keyword>
<keyword id="KW-0460">Magnesium</keyword>
<keyword id="KW-0479">Metal-binding</keyword>
<keyword id="KW-1185">Reference proteome</keyword>